<evidence type="ECO:0000255" key="1">
    <source>
        <dbReference type="HAMAP-Rule" id="MF_01103"/>
    </source>
</evidence>
<evidence type="ECO:0000256" key="2">
    <source>
        <dbReference type="SAM" id="MobiDB-lite"/>
    </source>
</evidence>
<protein>
    <recommendedName>
        <fullName evidence="1">UPF0291 protein lin1342</fullName>
    </recommendedName>
</protein>
<reference key="1">
    <citation type="journal article" date="2001" name="Science">
        <title>Comparative genomics of Listeria species.</title>
        <authorList>
            <person name="Glaser P."/>
            <person name="Frangeul L."/>
            <person name="Buchrieser C."/>
            <person name="Rusniok C."/>
            <person name="Amend A."/>
            <person name="Baquero F."/>
            <person name="Berche P."/>
            <person name="Bloecker H."/>
            <person name="Brandt P."/>
            <person name="Chakraborty T."/>
            <person name="Charbit A."/>
            <person name="Chetouani F."/>
            <person name="Couve E."/>
            <person name="de Daruvar A."/>
            <person name="Dehoux P."/>
            <person name="Domann E."/>
            <person name="Dominguez-Bernal G."/>
            <person name="Duchaud E."/>
            <person name="Durant L."/>
            <person name="Dussurget O."/>
            <person name="Entian K.-D."/>
            <person name="Fsihi H."/>
            <person name="Garcia-del Portillo F."/>
            <person name="Garrido P."/>
            <person name="Gautier L."/>
            <person name="Goebel W."/>
            <person name="Gomez-Lopez N."/>
            <person name="Hain T."/>
            <person name="Hauf J."/>
            <person name="Jackson D."/>
            <person name="Jones L.-M."/>
            <person name="Kaerst U."/>
            <person name="Kreft J."/>
            <person name="Kuhn M."/>
            <person name="Kunst F."/>
            <person name="Kurapkat G."/>
            <person name="Madueno E."/>
            <person name="Maitournam A."/>
            <person name="Mata Vicente J."/>
            <person name="Ng E."/>
            <person name="Nedjari H."/>
            <person name="Nordsiek G."/>
            <person name="Novella S."/>
            <person name="de Pablos B."/>
            <person name="Perez-Diaz J.-C."/>
            <person name="Purcell R."/>
            <person name="Remmel B."/>
            <person name="Rose M."/>
            <person name="Schlueter T."/>
            <person name="Simoes N."/>
            <person name="Tierrez A."/>
            <person name="Vazquez-Boland J.-A."/>
            <person name="Voss H."/>
            <person name="Wehland J."/>
            <person name="Cossart P."/>
        </authorList>
    </citation>
    <scope>NUCLEOTIDE SEQUENCE [LARGE SCALE GENOMIC DNA]</scope>
    <source>
        <strain>ATCC BAA-680 / CLIP 11262</strain>
    </source>
</reference>
<accession>Q92C49</accession>
<proteinExistence type="inferred from homology"/>
<sequence length="75" mass="8780">MLEKAKIDRINELSKKKKAGTLTADEKVEQEKLRKEYIKSFRTHMKGTIENTTIIDPKGNDVTPHKIKQMRKNKK</sequence>
<feature type="chain" id="PRO_0000094977" description="UPF0291 protein lin1342">
    <location>
        <begin position="1"/>
        <end position="75"/>
    </location>
</feature>
<feature type="region of interest" description="Disordered" evidence="2">
    <location>
        <begin position="55"/>
        <end position="75"/>
    </location>
</feature>
<feature type="compositionally biased region" description="Basic residues" evidence="2">
    <location>
        <begin position="65"/>
        <end position="75"/>
    </location>
</feature>
<dbReference type="EMBL" id="AL596168">
    <property type="protein sequence ID" value="CAC96573.1"/>
    <property type="molecule type" value="Genomic_DNA"/>
</dbReference>
<dbReference type="PIR" id="AE1600">
    <property type="entry name" value="AE1600"/>
</dbReference>
<dbReference type="RefSeq" id="WP_003771647.1">
    <property type="nucleotide sequence ID" value="NC_003212.1"/>
</dbReference>
<dbReference type="SMR" id="Q92C49"/>
<dbReference type="STRING" id="272626.gene:17565673"/>
<dbReference type="GeneID" id="93234722"/>
<dbReference type="KEGG" id="lin:lin1342"/>
<dbReference type="eggNOG" id="COG4224">
    <property type="taxonomic scope" value="Bacteria"/>
</dbReference>
<dbReference type="HOGENOM" id="CLU_173137_0_2_9"/>
<dbReference type="OrthoDB" id="390105at2"/>
<dbReference type="Proteomes" id="UP000002513">
    <property type="component" value="Chromosome"/>
</dbReference>
<dbReference type="GO" id="GO:0005737">
    <property type="term" value="C:cytoplasm"/>
    <property type="evidence" value="ECO:0007669"/>
    <property type="project" value="UniProtKB-SubCell"/>
</dbReference>
<dbReference type="Gene3D" id="1.10.287.540">
    <property type="entry name" value="Helix hairpin bin"/>
    <property type="match status" value="1"/>
</dbReference>
<dbReference type="HAMAP" id="MF_01103">
    <property type="entry name" value="UPF0291"/>
    <property type="match status" value="1"/>
</dbReference>
<dbReference type="InterPro" id="IPR009242">
    <property type="entry name" value="DUF896"/>
</dbReference>
<dbReference type="PANTHER" id="PTHR37300">
    <property type="entry name" value="UPF0291 PROTEIN CBO2609/CLC_2481"/>
    <property type="match status" value="1"/>
</dbReference>
<dbReference type="PANTHER" id="PTHR37300:SF1">
    <property type="entry name" value="UPF0291 PROTEIN YNZC"/>
    <property type="match status" value="1"/>
</dbReference>
<dbReference type="Pfam" id="PF05979">
    <property type="entry name" value="DUF896"/>
    <property type="match status" value="1"/>
</dbReference>
<dbReference type="SUPFAM" id="SSF158221">
    <property type="entry name" value="YnzC-like"/>
    <property type="match status" value="1"/>
</dbReference>
<comment type="subcellular location">
    <subcellularLocation>
        <location evidence="1">Cytoplasm</location>
    </subcellularLocation>
</comment>
<comment type="similarity">
    <text evidence="1">Belongs to the UPF0291 family.</text>
</comment>
<organism>
    <name type="scientific">Listeria innocua serovar 6a (strain ATCC BAA-680 / CLIP 11262)</name>
    <dbReference type="NCBI Taxonomy" id="272626"/>
    <lineage>
        <taxon>Bacteria</taxon>
        <taxon>Bacillati</taxon>
        <taxon>Bacillota</taxon>
        <taxon>Bacilli</taxon>
        <taxon>Bacillales</taxon>
        <taxon>Listeriaceae</taxon>
        <taxon>Listeria</taxon>
    </lineage>
</organism>
<name>Y1342_LISIN</name>
<keyword id="KW-0963">Cytoplasm</keyword>
<gene>
    <name type="ordered locus">lin1342</name>
</gene>